<accession>P32442</accession>
<accession>Q543E8</accession>
<gene>
    <name type="primary">Meox1</name>
    <name type="synonym">Mox-1</name>
    <name type="synonym">Mox1</name>
</gene>
<feature type="chain" id="PRO_0000049196" description="Homeobox protein MOX-1">
    <location>
        <begin position="1"/>
        <end position="253"/>
    </location>
</feature>
<feature type="DNA-binding region" description="Homeobox" evidence="2">
    <location>
        <begin position="170"/>
        <end position="229"/>
    </location>
</feature>
<feature type="region of interest" description="Disordered" evidence="3">
    <location>
        <begin position="1"/>
        <end position="44"/>
    </location>
</feature>
<feature type="region of interest" description="Disordered" evidence="3">
    <location>
        <begin position="139"/>
        <end position="177"/>
    </location>
</feature>
<feature type="region of interest" description="Disordered" evidence="3">
    <location>
        <begin position="226"/>
        <end position="253"/>
    </location>
</feature>
<feature type="compositionally biased region" description="Basic and acidic residues" evidence="3">
    <location>
        <begin position="166"/>
        <end position="177"/>
    </location>
</feature>
<feature type="mutagenesis site" description="Abolishes DNA-binding. Does not affect ability to activate expression of CDKN2A." evidence="10">
    <original>Q</original>
    <variation>E</variation>
    <location>
        <position position="219"/>
    </location>
</feature>
<reference key="1">
    <citation type="journal article" date="1992" name="Development">
        <title>Mox-1 and Mox-2 define a novel homeobox gene subfamily and are differentially expressed during early mesodermal patterning in mouse embryos.</title>
        <authorList>
            <person name="Candia A.F."/>
            <person name="Hu J."/>
            <person name="Crosby J."/>
            <person name="Lalley P.A."/>
            <person name="Noden D."/>
            <person name="Nadeau J.H."/>
            <person name="Wright C.V.E."/>
        </authorList>
    </citation>
    <scope>NUCLEOTIDE SEQUENCE [MRNA]</scope>
    <scope>FUNCTION</scope>
    <scope>TISSUE SPECIFICITY</scope>
    <scope>DEVELOPMENTAL STAGE</scope>
</reference>
<reference key="2">
    <citation type="journal article" date="2005" name="Science">
        <title>The transcriptional landscape of the mammalian genome.</title>
        <authorList>
            <person name="Carninci P."/>
            <person name="Kasukawa T."/>
            <person name="Katayama S."/>
            <person name="Gough J."/>
            <person name="Frith M.C."/>
            <person name="Maeda N."/>
            <person name="Oyama R."/>
            <person name="Ravasi T."/>
            <person name="Lenhard B."/>
            <person name="Wells C."/>
            <person name="Kodzius R."/>
            <person name="Shimokawa K."/>
            <person name="Bajic V.B."/>
            <person name="Brenner S.E."/>
            <person name="Batalov S."/>
            <person name="Forrest A.R."/>
            <person name="Zavolan M."/>
            <person name="Davis M.J."/>
            <person name="Wilming L.G."/>
            <person name="Aidinis V."/>
            <person name="Allen J.E."/>
            <person name="Ambesi-Impiombato A."/>
            <person name="Apweiler R."/>
            <person name="Aturaliya R.N."/>
            <person name="Bailey T.L."/>
            <person name="Bansal M."/>
            <person name="Baxter L."/>
            <person name="Beisel K.W."/>
            <person name="Bersano T."/>
            <person name="Bono H."/>
            <person name="Chalk A.M."/>
            <person name="Chiu K.P."/>
            <person name="Choudhary V."/>
            <person name="Christoffels A."/>
            <person name="Clutterbuck D.R."/>
            <person name="Crowe M.L."/>
            <person name="Dalla E."/>
            <person name="Dalrymple B.P."/>
            <person name="de Bono B."/>
            <person name="Della Gatta G."/>
            <person name="di Bernardo D."/>
            <person name="Down T."/>
            <person name="Engstrom P."/>
            <person name="Fagiolini M."/>
            <person name="Faulkner G."/>
            <person name="Fletcher C.F."/>
            <person name="Fukushima T."/>
            <person name="Furuno M."/>
            <person name="Futaki S."/>
            <person name="Gariboldi M."/>
            <person name="Georgii-Hemming P."/>
            <person name="Gingeras T.R."/>
            <person name="Gojobori T."/>
            <person name="Green R.E."/>
            <person name="Gustincich S."/>
            <person name="Harbers M."/>
            <person name="Hayashi Y."/>
            <person name="Hensch T.K."/>
            <person name="Hirokawa N."/>
            <person name="Hill D."/>
            <person name="Huminiecki L."/>
            <person name="Iacono M."/>
            <person name="Ikeo K."/>
            <person name="Iwama A."/>
            <person name="Ishikawa T."/>
            <person name="Jakt M."/>
            <person name="Kanapin A."/>
            <person name="Katoh M."/>
            <person name="Kawasawa Y."/>
            <person name="Kelso J."/>
            <person name="Kitamura H."/>
            <person name="Kitano H."/>
            <person name="Kollias G."/>
            <person name="Krishnan S.P."/>
            <person name="Kruger A."/>
            <person name="Kummerfeld S.K."/>
            <person name="Kurochkin I.V."/>
            <person name="Lareau L.F."/>
            <person name="Lazarevic D."/>
            <person name="Lipovich L."/>
            <person name="Liu J."/>
            <person name="Liuni S."/>
            <person name="McWilliam S."/>
            <person name="Madan Babu M."/>
            <person name="Madera M."/>
            <person name="Marchionni L."/>
            <person name="Matsuda H."/>
            <person name="Matsuzawa S."/>
            <person name="Miki H."/>
            <person name="Mignone F."/>
            <person name="Miyake S."/>
            <person name="Morris K."/>
            <person name="Mottagui-Tabar S."/>
            <person name="Mulder N."/>
            <person name="Nakano N."/>
            <person name="Nakauchi H."/>
            <person name="Ng P."/>
            <person name="Nilsson R."/>
            <person name="Nishiguchi S."/>
            <person name="Nishikawa S."/>
            <person name="Nori F."/>
            <person name="Ohara O."/>
            <person name="Okazaki Y."/>
            <person name="Orlando V."/>
            <person name="Pang K.C."/>
            <person name="Pavan W.J."/>
            <person name="Pavesi G."/>
            <person name="Pesole G."/>
            <person name="Petrovsky N."/>
            <person name="Piazza S."/>
            <person name="Reed J."/>
            <person name="Reid J.F."/>
            <person name="Ring B.Z."/>
            <person name="Ringwald M."/>
            <person name="Rost B."/>
            <person name="Ruan Y."/>
            <person name="Salzberg S.L."/>
            <person name="Sandelin A."/>
            <person name="Schneider C."/>
            <person name="Schoenbach C."/>
            <person name="Sekiguchi K."/>
            <person name="Semple C.A."/>
            <person name="Seno S."/>
            <person name="Sessa L."/>
            <person name="Sheng Y."/>
            <person name="Shibata Y."/>
            <person name="Shimada H."/>
            <person name="Shimada K."/>
            <person name="Silva D."/>
            <person name="Sinclair B."/>
            <person name="Sperling S."/>
            <person name="Stupka E."/>
            <person name="Sugiura K."/>
            <person name="Sultana R."/>
            <person name="Takenaka Y."/>
            <person name="Taki K."/>
            <person name="Tammoja K."/>
            <person name="Tan S.L."/>
            <person name="Tang S."/>
            <person name="Taylor M.S."/>
            <person name="Tegner J."/>
            <person name="Teichmann S.A."/>
            <person name="Ueda H.R."/>
            <person name="van Nimwegen E."/>
            <person name="Verardo R."/>
            <person name="Wei C.L."/>
            <person name="Yagi K."/>
            <person name="Yamanishi H."/>
            <person name="Zabarovsky E."/>
            <person name="Zhu S."/>
            <person name="Zimmer A."/>
            <person name="Hide W."/>
            <person name="Bult C."/>
            <person name="Grimmond S.M."/>
            <person name="Teasdale R.D."/>
            <person name="Liu E.T."/>
            <person name="Brusic V."/>
            <person name="Quackenbush J."/>
            <person name="Wahlestedt C."/>
            <person name="Mattick J.S."/>
            <person name="Hume D.A."/>
            <person name="Kai C."/>
            <person name="Sasaki D."/>
            <person name="Tomaru Y."/>
            <person name="Fukuda S."/>
            <person name="Kanamori-Katayama M."/>
            <person name="Suzuki M."/>
            <person name="Aoki J."/>
            <person name="Arakawa T."/>
            <person name="Iida J."/>
            <person name="Imamura K."/>
            <person name="Itoh M."/>
            <person name="Kato T."/>
            <person name="Kawaji H."/>
            <person name="Kawagashira N."/>
            <person name="Kawashima T."/>
            <person name="Kojima M."/>
            <person name="Kondo S."/>
            <person name="Konno H."/>
            <person name="Nakano K."/>
            <person name="Ninomiya N."/>
            <person name="Nishio T."/>
            <person name="Okada M."/>
            <person name="Plessy C."/>
            <person name="Shibata K."/>
            <person name="Shiraki T."/>
            <person name="Suzuki S."/>
            <person name="Tagami M."/>
            <person name="Waki K."/>
            <person name="Watahiki A."/>
            <person name="Okamura-Oho Y."/>
            <person name="Suzuki H."/>
            <person name="Kawai J."/>
            <person name="Hayashizaki Y."/>
        </authorList>
    </citation>
    <scope>NUCLEOTIDE SEQUENCE [LARGE SCALE MRNA]</scope>
    <source>
        <strain evidence="11">C57BL/6J</strain>
        <tissue evidence="11">Heart</tissue>
    </source>
</reference>
<reference key="3">
    <citation type="submission" date="2005-07" db="EMBL/GenBank/DDBJ databases">
        <authorList>
            <person name="Mural R.J."/>
            <person name="Adams M.D."/>
            <person name="Myers E.W."/>
            <person name="Smith H.O."/>
            <person name="Venter J.C."/>
        </authorList>
    </citation>
    <scope>NUCLEOTIDE SEQUENCE [LARGE SCALE GENOMIC DNA]</scope>
</reference>
<reference key="4">
    <citation type="journal article" date="2004" name="Genome Res.">
        <title>The status, quality, and expansion of the NIH full-length cDNA project: the Mammalian Gene Collection (MGC).</title>
        <authorList>
            <consortium name="The MGC Project Team"/>
        </authorList>
    </citation>
    <scope>NUCLEOTIDE SEQUENCE [LARGE SCALE MRNA]</scope>
    <source>
        <strain>C57BL/6J</strain>
        <tissue>Mammary gland</tissue>
    </source>
</reference>
<reference key="5">
    <citation type="journal article" date="2003" name="Development">
        <title>The concerted action of Meox homeobox genes is required upstream of genetic pathways essential for the formation, patterning and differentiation of somites.</title>
        <authorList>
            <person name="Mankoo B.S."/>
            <person name="Skuntz S."/>
            <person name="Harrigan I."/>
            <person name="Grigorieva E."/>
            <person name="Candia A."/>
            <person name="Wright C.V."/>
            <person name="Arnheiter H."/>
            <person name="Pachnis V."/>
        </authorList>
    </citation>
    <scope>FUNCTION</scope>
    <scope>DISRUPTION PHENOTYPE</scope>
</reference>
<reference key="6">
    <citation type="journal article" date="2004" name="J. Biol. Chem.">
        <title>Disruption of Meox or Gli activity ablates skeletal myogenesis in P19 cells.</title>
        <authorList>
            <person name="Petropoulos H."/>
            <person name="Gianakopoulos P.J."/>
            <person name="Ridgeway A.G."/>
            <person name="Skerjanc I.S."/>
        </authorList>
    </citation>
    <scope>FUNCTION</scope>
</reference>
<reference key="7">
    <citation type="journal article" date="2004" name="Mol. Cell. Biol.">
        <title>Meox homeodomain proteins are required for Bapx1 expression in the sclerotome and activate its transcription by direct binding to its promoter.</title>
        <authorList>
            <person name="Rodrigo I."/>
            <person name="Bovolenta P."/>
            <person name="Mankoo B.S."/>
            <person name="Imai K."/>
        </authorList>
    </citation>
    <scope>FUNCTION</scope>
</reference>
<reference key="8">
    <citation type="journal article" date="2008" name="Development">
        <title>Developmental origin of smooth muscle cells in the descending aorta in mice.</title>
        <authorList>
            <person name="Wasteson P."/>
            <person name="Johansson B.R."/>
            <person name="Jukkola T."/>
            <person name="Breuer S."/>
            <person name="Akyurek L.M."/>
            <person name="Partanen J."/>
            <person name="Lindahl P."/>
        </authorList>
    </citation>
    <scope>FUNCTION</scope>
</reference>
<reference key="9">
    <citation type="journal article" date="2009" name="Dev. Biol.">
        <title>Lack of the mesodermal homeodomain protein MEOX1 disrupts sclerotome polarity and leads to a remodeling of the cranio-cervical joints of the axial skeleton.</title>
        <authorList>
            <person name="Skuntz S."/>
            <person name="Mankoo B."/>
            <person name="Nguyen M.T."/>
            <person name="Hustert E."/>
            <person name="Nakayama A."/>
            <person name="Tournier-Lasserve E."/>
            <person name="Wright C.V."/>
            <person name="Pachnis V."/>
            <person name="Bharti K."/>
            <person name="Arnheiter H."/>
        </authorList>
    </citation>
    <scope>FUNCTION</scope>
    <scope>DNA-BINDING</scope>
    <scope>DISRUPTION PHENOTYPE</scope>
</reference>
<reference key="10">
    <citation type="journal article" date="2011" name="PLoS ONE">
        <title>Mechanisms of MEOX1 and MEOX2 regulation of the cyclin dependent kinase inhibitors p21 and p16 in vascular endothelial cells.</title>
        <authorList>
            <person name="Douville J.M."/>
            <person name="Cheung D.Y."/>
            <person name="Herbert K.L."/>
            <person name="Moffatt T."/>
            <person name="Wigle J.T."/>
        </authorList>
    </citation>
    <scope>FUNCTION</scope>
    <scope>SUBCELLULAR LOCATION</scope>
    <scope>MUTAGENESIS OF GLN-219</scope>
</reference>
<sequence>MDPVANSCVRNPQPPAPVWGCLRNPHSEDSSASGLSHYPPTPFSFHQKSDFPATAAYPDFSASCLAATPHSLPRTERIFNEQHPAFPQTPDWHFPISEAGQRLNLGPAGSAREMGAGSPGLVDGTAGLGEDCMVLGTIANETEKKSSRRKKERSDNQENGGGKPEGSSKARKERTAFTKEQLRELEAEFAHHNYLTRLRRYEIAVNLDLSERQVKVWFQNRRMKWKRVKGGQPVSPQEQDREDGDSAASPSSE</sequence>
<protein>
    <recommendedName>
        <fullName>Homeobox protein MOX-1</fullName>
    </recommendedName>
    <alternativeName>
        <fullName>Mesenchyme homeobox 1</fullName>
    </alternativeName>
</protein>
<evidence type="ECO:0000250" key="1">
    <source>
        <dbReference type="UniProtKB" id="F1Q4R9"/>
    </source>
</evidence>
<evidence type="ECO:0000255" key="2">
    <source>
        <dbReference type="PROSITE-ProRule" id="PRU00108"/>
    </source>
</evidence>
<evidence type="ECO:0000256" key="3">
    <source>
        <dbReference type="SAM" id="MobiDB-lite"/>
    </source>
</evidence>
<evidence type="ECO:0000269" key="4">
    <source>
    </source>
</evidence>
<evidence type="ECO:0000269" key="5">
    <source>
    </source>
</evidence>
<evidence type="ECO:0000269" key="6">
    <source>
    </source>
</evidence>
<evidence type="ECO:0000269" key="7">
    <source>
    </source>
</evidence>
<evidence type="ECO:0000269" key="8">
    <source>
    </source>
</evidence>
<evidence type="ECO:0000269" key="9">
    <source>
    </source>
</evidence>
<evidence type="ECO:0000269" key="10">
    <source>
    </source>
</evidence>
<evidence type="ECO:0000312" key="11">
    <source>
        <dbReference type="EMBL" id="BAC34961.1"/>
    </source>
</evidence>
<keyword id="KW-0010">Activator</keyword>
<keyword id="KW-0963">Cytoplasm</keyword>
<keyword id="KW-0217">Developmental protein</keyword>
<keyword id="KW-0238">DNA-binding</keyword>
<keyword id="KW-0371">Homeobox</keyword>
<keyword id="KW-0539">Nucleus</keyword>
<keyword id="KW-1185">Reference proteome</keyword>
<keyword id="KW-0678">Repressor</keyword>
<keyword id="KW-0804">Transcription</keyword>
<keyword id="KW-0805">Transcription regulation</keyword>
<name>MEOX1_MOUSE</name>
<dbReference type="EMBL" id="Z15103">
    <property type="protein sequence ID" value="CAA78812.1"/>
    <property type="molecule type" value="mRNA"/>
</dbReference>
<dbReference type="EMBL" id="AK052370">
    <property type="protein sequence ID" value="BAC34961.1"/>
    <property type="molecule type" value="mRNA"/>
</dbReference>
<dbReference type="EMBL" id="CH466558">
    <property type="protein sequence ID" value="EDL34069.1"/>
    <property type="molecule type" value="Genomic_DNA"/>
</dbReference>
<dbReference type="EMBL" id="BC011082">
    <property type="protein sequence ID" value="AAH11082.1"/>
    <property type="molecule type" value="mRNA"/>
</dbReference>
<dbReference type="CCDS" id="CCDS25480.1"/>
<dbReference type="PIR" id="A49122">
    <property type="entry name" value="A49122"/>
</dbReference>
<dbReference type="RefSeq" id="NP_034921.1">
    <property type="nucleotide sequence ID" value="NM_010791.3"/>
</dbReference>
<dbReference type="SMR" id="P32442"/>
<dbReference type="BioGRID" id="201394">
    <property type="interactions" value="3"/>
</dbReference>
<dbReference type="FunCoup" id="P32442">
    <property type="interactions" value="1576"/>
</dbReference>
<dbReference type="STRING" id="10090.ENSMUSP00000051158"/>
<dbReference type="PhosphoSitePlus" id="P32442"/>
<dbReference type="PaxDb" id="10090-ENSMUSP00000051158"/>
<dbReference type="ProteomicsDB" id="296000"/>
<dbReference type="Antibodypedia" id="17286">
    <property type="antibodies" value="424 antibodies from 31 providers"/>
</dbReference>
<dbReference type="DNASU" id="17285"/>
<dbReference type="Ensembl" id="ENSMUST00000057054.8">
    <property type="protein sequence ID" value="ENSMUSP00000051158.8"/>
    <property type="gene ID" value="ENSMUSG00000001493.10"/>
</dbReference>
<dbReference type="GeneID" id="17285"/>
<dbReference type="KEGG" id="mmu:17285"/>
<dbReference type="UCSC" id="uc007lpx.1">
    <property type="organism name" value="mouse"/>
</dbReference>
<dbReference type="AGR" id="MGI:103220"/>
<dbReference type="CTD" id="4222"/>
<dbReference type="MGI" id="MGI:103220">
    <property type="gene designation" value="Meox1"/>
</dbReference>
<dbReference type="VEuPathDB" id="HostDB:ENSMUSG00000001493"/>
<dbReference type="eggNOG" id="KOG0489">
    <property type="taxonomic scope" value="Eukaryota"/>
</dbReference>
<dbReference type="GeneTree" id="ENSGT00940000154018"/>
<dbReference type="HOGENOM" id="CLU_081326_1_0_1"/>
<dbReference type="InParanoid" id="P32442"/>
<dbReference type="OMA" id="HAPSILW"/>
<dbReference type="OrthoDB" id="6159439at2759"/>
<dbReference type="PhylomeDB" id="P32442"/>
<dbReference type="TreeFam" id="TF351603"/>
<dbReference type="BioGRID-ORCS" id="17285">
    <property type="hits" value="2 hits in 79 CRISPR screens"/>
</dbReference>
<dbReference type="ChiTaRS" id="Meox1">
    <property type="organism name" value="mouse"/>
</dbReference>
<dbReference type="PRO" id="PR:P32442"/>
<dbReference type="Proteomes" id="UP000000589">
    <property type="component" value="Chromosome 11"/>
</dbReference>
<dbReference type="RNAct" id="P32442">
    <property type="molecule type" value="protein"/>
</dbReference>
<dbReference type="Bgee" id="ENSMUSG00000001493">
    <property type="expression patterns" value="Expressed in somite and 137 other cell types or tissues"/>
</dbReference>
<dbReference type="GO" id="GO:0005737">
    <property type="term" value="C:cytoplasm"/>
    <property type="evidence" value="ECO:0000314"/>
    <property type="project" value="UniProtKB"/>
</dbReference>
<dbReference type="GO" id="GO:0005634">
    <property type="term" value="C:nucleus"/>
    <property type="evidence" value="ECO:0000314"/>
    <property type="project" value="UniProtKB"/>
</dbReference>
<dbReference type="GO" id="GO:0003682">
    <property type="term" value="F:chromatin binding"/>
    <property type="evidence" value="ECO:0000314"/>
    <property type="project" value="MGI"/>
</dbReference>
<dbReference type="GO" id="GO:0001228">
    <property type="term" value="F:DNA-binding transcription activator activity, RNA polymerase II-specific"/>
    <property type="evidence" value="ECO:0000314"/>
    <property type="project" value="NTNU_SB"/>
</dbReference>
<dbReference type="GO" id="GO:0003700">
    <property type="term" value="F:DNA-binding transcription factor activity"/>
    <property type="evidence" value="ECO:0000314"/>
    <property type="project" value="UniProtKB"/>
</dbReference>
<dbReference type="GO" id="GO:0071837">
    <property type="term" value="F:HMG box domain binding"/>
    <property type="evidence" value="ECO:0000353"/>
    <property type="project" value="UniProtKB"/>
</dbReference>
<dbReference type="GO" id="GO:0000978">
    <property type="term" value="F:RNA polymerase II cis-regulatory region sequence-specific DNA binding"/>
    <property type="evidence" value="ECO:0000314"/>
    <property type="project" value="UniProtKB"/>
</dbReference>
<dbReference type="GO" id="GO:0043565">
    <property type="term" value="F:sequence-specific DNA binding"/>
    <property type="evidence" value="ECO:0000315"/>
    <property type="project" value="UniProtKB"/>
</dbReference>
<dbReference type="GO" id="GO:0060218">
    <property type="term" value="P:hematopoietic stem cell differentiation"/>
    <property type="evidence" value="ECO:0000250"/>
    <property type="project" value="UniProtKB"/>
</dbReference>
<dbReference type="GO" id="GO:0045944">
    <property type="term" value="P:positive regulation of transcription by RNA polymerase II"/>
    <property type="evidence" value="ECO:0000314"/>
    <property type="project" value="NTNU_SB"/>
</dbReference>
<dbReference type="GO" id="GO:0061056">
    <property type="term" value="P:sclerotome development"/>
    <property type="evidence" value="ECO:0000315"/>
    <property type="project" value="UniProtKB"/>
</dbReference>
<dbReference type="GO" id="GO:0061053">
    <property type="term" value="P:somite development"/>
    <property type="evidence" value="ECO:0000315"/>
    <property type="project" value="UniProtKB"/>
</dbReference>
<dbReference type="GO" id="GO:0001757">
    <property type="term" value="P:somite specification"/>
    <property type="evidence" value="ECO:0000316"/>
    <property type="project" value="MGI"/>
</dbReference>
<dbReference type="CDD" id="cd00086">
    <property type="entry name" value="homeodomain"/>
    <property type="match status" value="1"/>
</dbReference>
<dbReference type="FunFam" id="1.10.10.60:FF:000109">
    <property type="entry name" value="Homeobox protein MOX-2"/>
    <property type="match status" value="1"/>
</dbReference>
<dbReference type="Gene3D" id="1.10.10.60">
    <property type="entry name" value="Homeodomain-like"/>
    <property type="match status" value="1"/>
</dbReference>
<dbReference type="InterPro" id="IPR001356">
    <property type="entry name" value="HD"/>
</dbReference>
<dbReference type="InterPro" id="IPR020479">
    <property type="entry name" value="HD_metazoa"/>
</dbReference>
<dbReference type="InterPro" id="IPR017970">
    <property type="entry name" value="Homeobox_CS"/>
</dbReference>
<dbReference type="InterPro" id="IPR009057">
    <property type="entry name" value="Homeodomain-like_sf"/>
</dbReference>
<dbReference type="InterPro" id="IPR042634">
    <property type="entry name" value="MOX-1/MOX-2"/>
</dbReference>
<dbReference type="PANTHER" id="PTHR24328">
    <property type="entry name" value="HOMEOBOX PROTEIN MOX"/>
    <property type="match status" value="1"/>
</dbReference>
<dbReference type="PANTHER" id="PTHR24328:SF8">
    <property type="entry name" value="HOMEOBOX PROTEIN MOX-1"/>
    <property type="match status" value="1"/>
</dbReference>
<dbReference type="Pfam" id="PF00046">
    <property type="entry name" value="Homeodomain"/>
    <property type="match status" value="1"/>
</dbReference>
<dbReference type="PRINTS" id="PR00024">
    <property type="entry name" value="HOMEOBOX"/>
</dbReference>
<dbReference type="SMART" id="SM00389">
    <property type="entry name" value="HOX"/>
    <property type="match status" value="1"/>
</dbReference>
<dbReference type="SUPFAM" id="SSF46689">
    <property type="entry name" value="Homeodomain-like"/>
    <property type="match status" value="1"/>
</dbReference>
<dbReference type="PROSITE" id="PS00027">
    <property type="entry name" value="HOMEOBOX_1"/>
    <property type="match status" value="1"/>
</dbReference>
<dbReference type="PROSITE" id="PS50071">
    <property type="entry name" value="HOMEOBOX_2"/>
    <property type="match status" value="1"/>
</dbReference>
<organism>
    <name type="scientific">Mus musculus</name>
    <name type="common">Mouse</name>
    <dbReference type="NCBI Taxonomy" id="10090"/>
    <lineage>
        <taxon>Eukaryota</taxon>
        <taxon>Metazoa</taxon>
        <taxon>Chordata</taxon>
        <taxon>Craniata</taxon>
        <taxon>Vertebrata</taxon>
        <taxon>Euteleostomi</taxon>
        <taxon>Mammalia</taxon>
        <taxon>Eutheria</taxon>
        <taxon>Euarchontoglires</taxon>
        <taxon>Glires</taxon>
        <taxon>Rodentia</taxon>
        <taxon>Myomorpha</taxon>
        <taxon>Muroidea</taxon>
        <taxon>Muridae</taxon>
        <taxon>Murinae</taxon>
        <taxon>Mus</taxon>
        <taxon>Mus</taxon>
    </lineage>
</organism>
<comment type="function">
    <text evidence="1 4 5 6 7 8 9 10">Mesodermal transcription factor that plays a key role in somitogenesis and is specifically required for sclerotome development. Required for maintenance of the sclerotome polarity and formation of the cranio-cervical joints (PubMed:19520072). Binds specifically to the promoter of target genes and regulates their expression. Activates expression of NKX3-2 in the sclerotome (PubMed:15024065). Activates expression of CDKN1A and CDKN2A in endothelial cells, acting as a regulator of vascular cell proliferation. While it activates CDKN1A in a DNA-dependent manner, it activates CDKN2A in a DNA-independent manner (PubMed:22206000). Required for hematopoietic stem cell (HSCs) induction via its role in somitogenesis: specification of HSCs occurs via the deployment of a specific endothelial precursor population, which arises within a sub-compartment of the somite named endotome (By similarity).</text>
</comment>
<comment type="subcellular location">
    <subcellularLocation>
        <location evidence="10">Nucleus</location>
    </subcellularLocation>
    <subcellularLocation>
        <location evidence="10">Cytoplasm</location>
    </subcellularLocation>
    <text evidence="10">Localizes predominantly in the nucleus.</text>
</comment>
<comment type="tissue specificity">
    <text evidence="5">Heart, lateral plate derivatives, kidney, loose connective tissue at sites of bone formation and skeletal muscle-connective tissue apposition.</text>
</comment>
<comment type="developmental stage">
    <text evidence="5">After 7 dpc it is expressed in mesoderm lying posterior of the future primordial head and heart. Between 7.5 and 9.5 dpc it is expressed in presomitic mesoderm, epithelial and differentiating somites and in lateral plate mesoderm. In the body of mid-gestation embryos it is restricted to loose undifferentiated mesenchyme.</text>
</comment>
<comment type="disruption phenotype">
    <text evidence="4 9">Mice display mild defects in sclerotome derived vertebral and rib bones (PubMed:12925591). Abnormalities are restricted to the sclerotome and its derivatives and are characterized by a remodeling of the cranio-cervical joints, leading to the assimilation of the atlas into the basioccipital bone so that the skull rests on the axis (PubMed:19520072). Mice lacking Meox1 and Meox2 show extremely disrupted somite morphogenesis, patterning and differentiation. They lack an axial skeleton and skeletal muscles are severely deficient (PubMed:12925591).</text>
</comment>
<proteinExistence type="evidence at protein level"/>